<sequence>MKRRDVGSLFAGARVAESVPLAPLTTLRVGPVARTLVTCDTTDQVVGVLRELDDRARNGDCGPVLVFAGGSNVVIGDALADLTVVRVANDRVTVDGNLVRAEAGTVWDEVVVATIERGLGGLECLSGIPGSAGATPVQNVGAYGVEVSDVITRVRLLDRSTGDVSWVPAADLSFGYRTSVLKQAEGLALPAVVLEVEFALDASGRSAPLRYGELTAALGMNSGERGEPRAVRDAVLALRTRKGMVLDAADHDTWSVGSFFTNPVVAPEIYERLAAQTGESVPHYPAPDGVKLAAGWLLERAGFGKGYPGDPHARCRLSSKHALALTNRGGATAADVMVLARTVRDGVRDVFGITLKPEPVLVGCAL</sequence>
<reference key="1">
    <citation type="journal article" date="2007" name="Genome Res.">
        <title>Reductive evolution and niche adaptation inferred from the genome of Mycobacterium ulcerans, the causative agent of Buruli ulcer.</title>
        <authorList>
            <person name="Stinear T.P."/>
            <person name="Seemann T."/>
            <person name="Pidot S."/>
            <person name="Frigui W."/>
            <person name="Reysset G."/>
            <person name="Garnier T."/>
            <person name="Meurice G."/>
            <person name="Simon D."/>
            <person name="Bouchier C."/>
            <person name="Ma L."/>
            <person name="Tichit M."/>
            <person name="Porter J.L."/>
            <person name="Ryan J."/>
            <person name="Johnson P.D.R."/>
            <person name="Davies J.K."/>
            <person name="Jenkin G.A."/>
            <person name="Small P.L.C."/>
            <person name="Jones L.M."/>
            <person name="Tekaia F."/>
            <person name="Laval F."/>
            <person name="Daffe M."/>
            <person name="Parkhill J."/>
            <person name="Cole S.T."/>
        </authorList>
    </citation>
    <scope>NUCLEOTIDE SEQUENCE [LARGE SCALE GENOMIC DNA]</scope>
    <source>
        <strain>Agy99</strain>
    </source>
</reference>
<evidence type="ECO:0000255" key="1">
    <source>
        <dbReference type="HAMAP-Rule" id="MF_00037"/>
    </source>
</evidence>
<organism>
    <name type="scientific">Mycobacterium ulcerans (strain Agy99)</name>
    <dbReference type="NCBI Taxonomy" id="362242"/>
    <lineage>
        <taxon>Bacteria</taxon>
        <taxon>Bacillati</taxon>
        <taxon>Actinomycetota</taxon>
        <taxon>Actinomycetes</taxon>
        <taxon>Mycobacteriales</taxon>
        <taxon>Mycobacteriaceae</taxon>
        <taxon>Mycobacterium</taxon>
        <taxon>Mycobacterium ulcerans group</taxon>
    </lineage>
</organism>
<gene>
    <name evidence="1" type="primary">murB</name>
    <name type="ordered locus">MUL_4552</name>
</gene>
<feature type="chain" id="PRO_1000002899" description="UDP-N-acetylenolpyruvoylglucosamine reductase">
    <location>
        <begin position="1"/>
        <end position="366"/>
    </location>
</feature>
<feature type="domain" description="FAD-binding PCMH-type" evidence="1">
    <location>
        <begin position="29"/>
        <end position="203"/>
    </location>
</feature>
<feature type="active site" evidence="1">
    <location>
        <position position="177"/>
    </location>
</feature>
<feature type="active site" description="Proton donor" evidence="1">
    <location>
        <position position="258"/>
    </location>
</feature>
<feature type="active site" evidence="1">
    <location>
        <position position="358"/>
    </location>
</feature>
<keyword id="KW-0131">Cell cycle</keyword>
<keyword id="KW-0132">Cell division</keyword>
<keyword id="KW-0133">Cell shape</keyword>
<keyword id="KW-0961">Cell wall biogenesis/degradation</keyword>
<keyword id="KW-0963">Cytoplasm</keyword>
<keyword id="KW-0274">FAD</keyword>
<keyword id="KW-0285">Flavoprotein</keyword>
<keyword id="KW-0521">NADP</keyword>
<keyword id="KW-0560">Oxidoreductase</keyword>
<keyword id="KW-0573">Peptidoglycan synthesis</keyword>
<accession>A0PVY7</accession>
<comment type="function">
    <text evidence="1">Cell wall formation.</text>
</comment>
<comment type="catalytic activity">
    <reaction evidence="1">
        <text>UDP-N-acetyl-alpha-D-muramate + NADP(+) = UDP-N-acetyl-3-O-(1-carboxyvinyl)-alpha-D-glucosamine + NADPH + H(+)</text>
        <dbReference type="Rhea" id="RHEA:12248"/>
        <dbReference type="ChEBI" id="CHEBI:15378"/>
        <dbReference type="ChEBI" id="CHEBI:57783"/>
        <dbReference type="ChEBI" id="CHEBI:58349"/>
        <dbReference type="ChEBI" id="CHEBI:68483"/>
        <dbReference type="ChEBI" id="CHEBI:70757"/>
        <dbReference type="EC" id="1.3.1.98"/>
    </reaction>
</comment>
<comment type="cofactor">
    <cofactor evidence="1">
        <name>FAD</name>
        <dbReference type="ChEBI" id="CHEBI:57692"/>
    </cofactor>
</comment>
<comment type="pathway">
    <text evidence="1">Cell wall biogenesis; peptidoglycan biosynthesis.</text>
</comment>
<comment type="subcellular location">
    <subcellularLocation>
        <location evidence="1">Cytoplasm</location>
    </subcellularLocation>
</comment>
<comment type="similarity">
    <text evidence="1">Belongs to the MurB family.</text>
</comment>
<name>MURB_MYCUA</name>
<proteinExistence type="inferred from homology"/>
<protein>
    <recommendedName>
        <fullName evidence="1">UDP-N-acetylenolpyruvoylglucosamine reductase</fullName>
        <ecNumber evidence="1">1.3.1.98</ecNumber>
    </recommendedName>
    <alternativeName>
        <fullName evidence="1">UDP-N-acetylmuramate dehydrogenase</fullName>
    </alternativeName>
</protein>
<dbReference type="EC" id="1.3.1.98" evidence="1"/>
<dbReference type="EMBL" id="CP000325">
    <property type="protein sequence ID" value="ABL06506.1"/>
    <property type="molecule type" value="Genomic_DNA"/>
</dbReference>
<dbReference type="RefSeq" id="WP_011742105.1">
    <property type="nucleotide sequence ID" value="NC_008611.1"/>
</dbReference>
<dbReference type="SMR" id="A0PVY7"/>
<dbReference type="KEGG" id="mul:MUL_4552"/>
<dbReference type="eggNOG" id="COG0812">
    <property type="taxonomic scope" value="Bacteria"/>
</dbReference>
<dbReference type="HOGENOM" id="CLU_035304_0_1_11"/>
<dbReference type="UniPathway" id="UPA00219"/>
<dbReference type="Proteomes" id="UP000000765">
    <property type="component" value="Chromosome"/>
</dbReference>
<dbReference type="GO" id="GO:0005829">
    <property type="term" value="C:cytosol"/>
    <property type="evidence" value="ECO:0007669"/>
    <property type="project" value="TreeGrafter"/>
</dbReference>
<dbReference type="GO" id="GO:0071949">
    <property type="term" value="F:FAD binding"/>
    <property type="evidence" value="ECO:0007669"/>
    <property type="project" value="InterPro"/>
</dbReference>
<dbReference type="GO" id="GO:0008762">
    <property type="term" value="F:UDP-N-acetylmuramate dehydrogenase activity"/>
    <property type="evidence" value="ECO:0007669"/>
    <property type="project" value="UniProtKB-UniRule"/>
</dbReference>
<dbReference type="GO" id="GO:0051301">
    <property type="term" value="P:cell division"/>
    <property type="evidence" value="ECO:0007669"/>
    <property type="project" value="UniProtKB-KW"/>
</dbReference>
<dbReference type="GO" id="GO:0071555">
    <property type="term" value="P:cell wall organization"/>
    <property type="evidence" value="ECO:0007669"/>
    <property type="project" value="UniProtKB-KW"/>
</dbReference>
<dbReference type="GO" id="GO:0009252">
    <property type="term" value="P:peptidoglycan biosynthetic process"/>
    <property type="evidence" value="ECO:0007669"/>
    <property type="project" value="UniProtKB-UniRule"/>
</dbReference>
<dbReference type="GO" id="GO:0008360">
    <property type="term" value="P:regulation of cell shape"/>
    <property type="evidence" value="ECO:0007669"/>
    <property type="project" value="UniProtKB-KW"/>
</dbReference>
<dbReference type="Gene3D" id="3.30.465.10">
    <property type="match status" value="1"/>
</dbReference>
<dbReference type="Gene3D" id="3.90.78.10">
    <property type="entry name" value="UDP-N-acetylenolpyruvoylglucosamine reductase, C-terminal domain"/>
    <property type="match status" value="1"/>
</dbReference>
<dbReference type="Gene3D" id="3.30.43.10">
    <property type="entry name" value="Uridine Diphospho-n-acetylenolpyruvylglucosamine Reductase, domain 2"/>
    <property type="match status" value="1"/>
</dbReference>
<dbReference type="HAMAP" id="MF_00037">
    <property type="entry name" value="MurB"/>
    <property type="match status" value="1"/>
</dbReference>
<dbReference type="InterPro" id="IPR016166">
    <property type="entry name" value="FAD-bd_PCMH"/>
</dbReference>
<dbReference type="InterPro" id="IPR036318">
    <property type="entry name" value="FAD-bd_PCMH-like_sf"/>
</dbReference>
<dbReference type="InterPro" id="IPR016167">
    <property type="entry name" value="FAD-bd_PCMH_sub1"/>
</dbReference>
<dbReference type="InterPro" id="IPR016169">
    <property type="entry name" value="FAD-bd_PCMH_sub2"/>
</dbReference>
<dbReference type="InterPro" id="IPR003170">
    <property type="entry name" value="MurB"/>
</dbReference>
<dbReference type="InterPro" id="IPR011601">
    <property type="entry name" value="MurB_C"/>
</dbReference>
<dbReference type="InterPro" id="IPR036635">
    <property type="entry name" value="MurB_C_sf"/>
</dbReference>
<dbReference type="InterPro" id="IPR006094">
    <property type="entry name" value="Oxid_FAD_bind_N"/>
</dbReference>
<dbReference type="NCBIfam" id="TIGR00179">
    <property type="entry name" value="murB"/>
    <property type="match status" value="1"/>
</dbReference>
<dbReference type="NCBIfam" id="NF010478">
    <property type="entry name" value="PRK13903.1"/>
    <property type="match status" value="1"/>
</dbReference>
<dbReference type="PANTHER" id="PTHR21071">
    <property type="entry name" value="UDP-N-ACETYLENOLPYRUVOYLGLUCOSAMINE REDUCTASE"/>
    <property type="match status" value="1"/>
</dbReference>
<dbReference type="PANTHER" id="PTHR21071:SF4">
    <property type="entry name" value="UDP-N-ACETYLENOLPYRUVOYLGLUCOSAMINE REDUCTASE"/>
    <property type="match status" value="1"/>
</dbReference>
<dbReference type="Pfam" id="PF01565">
    <property type="entry name" value="FAD_binding_4"/>
    <property type="match status" value="1"/>
</dbReference>
<dbReference type="Pfam" id="PF02873">
    <property type="entry name" value="MurB_C"/>
    <property type="match status" value="1"/>
</dbReference>
<dbReference type="SUPFAM" id="SSF56176">
    <property type="entry name" value="FAD-binding/transporter-associated domain-like"/>
    <property type="match status" value="1"/>
</dbReference>
<dbReference type="SUPFAM" id="SSF56194">
    <property type="entry name" value="Uridine diphospho-N-Acetylenolpyruvylglucosamine reductase, MurB, C-terminal domain"/>
    <property type="match status" value="1"/>
</dbReference>
<dbReference type="PROSITE" id="PS51387">
    <property type="entry name" value="FAD_PCMH"/>
    <property type="match status" value="1"/>
</dbReference>